<organismHost>
    <name type="scientific">Serinus</name>
    <dbReference type="NCBI Taxonomy" id="9134"/>
</organismHost>
<accession>Q8QME6</accession>
<evidence type="ECO:0000250" key="1"/>
<evidence type="ECO:0000255" key="2"/>
<evidence type="ECO:0000305" key="3"/>
<protein>
    <recommendedName>
        <fullName>Probable capsid protein</fullName>
    </recommendedName>
</protein>
<reference key="1">
    <citation type="journal article" date="2001" name="Avian Pathol.">
        <title>Nucleotide sequence-based identification of a novel circovirus of canaries.</title>
        <authorList>
            <person name="Todd D."/>
            <person name="Weston J."/>
            <person name="Ball N.W."/>
            <person name="Borghmans B.J."/>
            <person name="Smyth J.A."/>
            <person name="Gelmini L."/>
            <person name="Lavazza A."/>
        </authorList>
    </citation>
    <scope>NUCLEOTIDE SEQUENCE [GENOMIC DNA]</scope>
</reference>
<dbReference type="EMBL" id="AJ301633">
    <property type="protein sequence ID" value="CAD23544.1"/>
    <property type="molecule type" value="Genomic_DNA"/>
</dbReference>
<dbReference type="RefSeq" id="NP_573443.1">
    <property type="nucleotide sequence ID" value="NC_003410.1"/>
</dbReference>
<dbReference type="GeneID" id="935130"/>
<dbReference type="KEGG" id="vg:935130"/>
<dbReference type="OrthoDB" id="7660at10239"/>
<dbReference type="Proteomes" id="UP000007621">
    <property type="component" value="Genome"/>
</dbReference>
<dbReference type="GO" id="GO:0043657">
    <property type="term" value="C:host cell"/>
    <property type="evidence" value="ECO:0007669"/>
    <property type="project" value="GOC"/>
</dbReference>
<dbReference type="GO" id="GO:0042025">
    <property type="term" value="C:host cell nucleus"/>
    <property type="evidence" value="ECO:0007669"/>
    <property type="project" value="UniProtKB-SubCell"/>
</dbReference>
<dbReference type="GO" id="GO:0039615">
    <property type="term" value="C:T=1 icosahedral viral capsid"/>
    <property type="evidence" value="ECO:0007669"/>
    <property type="project" value="UniProtKB-KW"/>
</dbReference>
<dbReference type="GO" id="GO:0003677">
    <property type="term" value="F:DNA binding"/>
    <property type="evidence" value="ECO:0007669"/>
    <property type="project" value="UniProtKB-KW"/>
</dbReference>
<dbReference type="GO" id="GO:0075509">
    <property type="term" value="P:endocytosis involved in viral entry into host cell"/>
    <property type="evidence" value="ECO:0007669"/>
    <property type="project" value="UniProtKB-KW"/>
</dbReference>
<dbReference type="GO" id="GO:0019069">
    <property type="term" value="P:viral capsid assembly"/>
    <property type="evidence" value="ECO:0007669"/>
    <property type="project" value="InterPro"/>
</dbReference>
<dbReference type="GO" id="GO:0075732">
    <property type="term" value="P:viral penetration into host nucleus"/>
    <property type="evidence" value="ECO:0007669"/>
    <property type="project" value="UniProtKB-KW"/>
</dbReference>
<dbReference type="GO" id="GO:0019062">
    <property type="term" value="P:virion attachment to host cell"/>
    <property type="evidence" value="ECO:0007669"/>
    <property type="project" value="UniProtKB-KW"/>
</dbReference>
<dbReference type="Gene3D" id="2.60.120.950">
    <property type="entry name" value="Circovirus capsid protein"/>
    <property type="match status" value="1"/>
</dbReference>
<dbReference type="InterPro" id="IPR003383">
    <property type="entry name" value="Circovirus_capsid"/>
</dbReference>
<dbReference type="InterPro" id="IPR038652">
    <property type="entry name" value="Circovirus_capsid_sf"/>
</dbReference>
<dbReference type="Pfam" id="PF02443">
    <property type="entry name" value="Circo_capsid"/>
    <property type="match status" value="1"/>
</dbReference>
<name>CAPSD_CACV</name>
<gene>
    <name type="primary">Cap</name>
    <name type="ORF">ORF2</name>
</gene>
<keyword id="KW-0167">Capsid protein</keyword>
<keyword id="KW-0238">DNA-binding</keyword>
<keyword id="KW-1048">Host nucleus</keyword>
<keyword id="KW-0945">Host-virus interaction</keyword>
<keyword id="KW-1185">Reference proteome</keyword>
<keyword id="KW-1140">T=1 icosahedral capsid protein</keyword>
<keyword id="KW-1161">Viral attachment to host cell</keyword>
<keyword id="KW-1162">Viral penetration into host cytoplasm</keyword>
<keyword id="KW-1163">Viral penetration into host nucleus</keyword>
<keyword id="KW-0946">Virion</keyword>
<keyword id="KW-1164">Virus endocytosis by host</keyword>
<keyword id="KW-1160">Virus entry into host cell</keyword>
<organism>
    <name type="scientific">Canary circovirus</name>
    <name type="common">CaCV</name>
    <dbReference type="NCBI Taxonomy" id="142661"/>
    <lineage>
        <taxon>Viruses</taxon>
        <taxon>Monodnaviria</taxon>
        <taxon>Shotokuvirae</taxon>
        <taxon>Cressdnaviricota</taxon>
        <taxon>Arfiviricetes</taxon>
        <taxon>Cirlivirales</taxon>
        <taxon>Circoviridae</taxon>
        <taxon>Circovirus</taxon>
        <taxon>Circovirus canary</taxon>
    </lineage>
</organism>
<proteinExistence type="inferred from homology"/>
<sequence length="250" mass="29994">MWLTFNQVARRRRPLAPRRRRWRRRYWXRRRRIPANRRGHRTNRVYRFRFVREFGQVLQKGTGGSQLSFGTDGINIILDDFLDWGTINWRLPFEDYRIRLAKVEMRPLNESWEEWKGFGHNVPIQDNHLEDFFKKTRLDADPLANWDGARKWDLRKGFKRLFKPRPQLSVTDTDAANVTAALWLNNPKSLWIPIMKKSDQNLPSSGTRVKHYGLAFSWPEPTPNQMDYQVKVTIYCEFRQMNLTHLATPK</sequence>
<comment type="function">
    <text evidence="1">Self-assembles to form the virion icosahedral capsid with a T=1 symmetry. This very small capsid (17 - 22 nm in diameter) allows the virus to be very stable in the environment and resistant to some disinfectants, including detergents. Essential for the initial attachment to heparan sulfate moieties and chondroitin sulfate B of the host cell surface proteoglycans. After attachment, the virus is endocytosed and traffics to the nucleus. The capsid protein binds and transports the viral genome and Rep across the nuclear envelope (By similarity).</text>
</comment>
<comment type="subunit">
    <text evidence="1">Homomultimer. Assembles in the nucleus, presumably in an immature form, then migrates to the cytoplasm once assembled as mature virion. Interacts with Rep; this interaction relocates Rep into the nucleus (By similarity).</text>
</comment>
<comment type="subcellular location">
    <subcellularLocation>
        <location evidence="1">Host nucleus</location>
    </subcellularLocation>
    <subcellularLocation>
        <location evidence="3">Virion</location>
    </subcellularLocation>
</comment>
<comment type="similarity">
    <text evidence="3">Belongs to the circoviridae capsid protein family.</text>
</comment>
<feature type="chain" id="PRO_0000319849" description="Probable capsid protein">
    <location>
        <begin position="1"/>
        <end position="250"/>
    </location>
</feature>
<feature type="region of interest" description="DNA-binding" evidence="1">
    <location>
        <begin position="1"/>
        <end position="39"/>
    </location>
</feature>
<feature type="region of interest" description="Nuclear localization signals" evidence="2">
    <location>
        <begin position="9"/>
        <end position="42"/>
    </location>
</feature>